<feature type="chain" id="PRO_0000083754" description="3-isopropylmalate dehydrogenase">
    <location>
        <begin position="1"/>
        <end position="348"/>
    </location>
</feature>
<feature type="binding site" evidence="1">
    <location>
        <begin position="76"/>
        <end position="87"/>
    </location>
    <ligand>
        <name>NAD(+)</name>
        <dbReference type="ChEBI" id="CHEBI:57540"/>
    </ligand>
</feature>
<feature type="binding site" evidence="1">
    <location>
        <position position="94"/>
    </location>
    <ligand>
        <name>substrate</name>
    </ligand>
</feature>
<feature type="binding site" evidence="1">
    <location>
        <position position="104"/>
    </location>
    <ligand>
        <name>substrate</name>
    </ligand>
</feature>
<feature type="binding site" evidence="1">
    <location>
        <position position="132"/>
    </location>
    <ligand>
        <name>substrate</name>
    </ligand>
</feature>
<feature type="binding site" evidence="1">
    <location>
        <position position="217"/>
    </location>
    <ligand>
        <name>Mg(2+)</name>
        <dbReference type="ChEBI" id="CHEBI:18420"/>
    </ligand>
</feature>
<feature type="binding site" evidence="1">
    <location>
        <position position="217"/>
    </location>
    <ligand>
        <name>substrate</name>
    </ligand>
</feature>
<feature type="binding site" evidence="1">
    <location>
        <position position="241"/>
    </location>
    <ligand>
        <name>Mg(2+)</name>
        <dbReference type="ChEBI" id="CHEBI:18420"/>
    </ligand>
</feature>
<feature type="binding site" evidence="1">
    <location>
        <position position="245"/>
    </location>
    <ligand>
        <name>Mg(2+)</name>
        <dbReference type="ChEBI" id="CHEBI:18420"/>
    </ligand>
</feature>
<feature type="binding site" evidence="1">
    <location>
        <begin position="275"/>
        <end position="287"/>
    </location>
    <ligand>
        <name>NAD(+)</name>
        <dbReference type="ChEBI" id="CHEBI:57540"/>
    </ligand>
</feature>
<feature type="site" description="Important for catalysis" evidence="1">
    <location>
        <position position="139"/>
    </location>
</feature>
<feature type="site" description="Important for catalysis" evidence="1">
    <location>
        <position position="185"/>
    </location>
</feature>
<reference key="1">
    <citation type="journal article" date="2001" name="Lancet">
        <title>Whole genome sequencing of meticillin-resistant Staphylococcus aureus.</title>
        <authorList>
            <person name="Kuroda M."/>
            <person name="Ohta T."/>
            <person name="Uchiyama I."/>
            <person name="Baba T."/>
            <person name="Yuzawa H."/>
            <person name="Kobayashi I."/>
            <person name="Cui L."/>
            <person name="Oguchi A."/>
            <person name="Aoki K."/>
            <person name="Nagai Y."/>
            <person name="Lian J.-Q."/>
            <person name="Ito T."/>
            <person name="Kanamori M."/>
            <person name="Matsumaru H."/>
            <person name="Maruyama A."/>
            <person name="Murakami H."/>
            <person name="Hosoyama A."/>
            <person name="Mizutani-Ui Y."/>
            <person name="Takahashi N.K."/>
            <person name="Sawano T."/>
            <person name="Inoue R."/>
            <person name="Kaito C."/>
            <person name="Sekimizu K."/>
            <person name="Hirakawa H."/>
            <person name="Kuhara S."/>
            <person name="Goto S."/>
            <person name="Yabuzaki J."/>
            <person name="Kanehisa M."/>
            <person name="Yamashita A."/>
            <person name="Oshima K."/>
            <person name="Furuya K."/>
            <person name="Yoshino C."/>
            <person name="Shiba T."/>
            <person name="Hattori M."/>
            <person name="Ogasawara N."/>
            <person name="Hayashi H."/>
            <person name="Hiramatsu K."/>
        </authorList>
    </citation>
    <scope>NUCLEOTIDE SEQUENCE [LARGE SCALE GENOMIC DNA]</scope>
    <source>
        <strain>Mu50 / ATCC 700699</strain>
    </source>
</reference>
<name>LEU3_STAAM</name>
<protein>
    <recommendedName>
        <fullName evidence="1">3-isopropylmalate dehydrogenase</fullName>
        <ecNumber evidence="1">1.1.1.85</ecNumber>
    </recommendedName>
    <alternativeName>
        <fullName evidence="1">3-IPM-DH</fullName>
    </alternativeName>
    <alternativeName>
        <fullName evidence="1">Beta-IPM dehydrogenase</fullName>
        <shortName evidence="1">IMDH</shortName>
    </alternativeName>
</protein>
<comment type="function">
    <text evidence="1">Catalyzes the oxidation of 3-carboxy-2-hydroxy-4-methylpentanoate (3-isopropylmalate) to 3-carboxy-4-methyl-2-oxopentanoate. The product decarboxylates to 4-methyl-2 oxopentanoate.</text>
</comment>
<comment type="catalytic activity">
    <reaction evidence="1">
        <text>(2R,3S)-3-isopropylmalate + NAD(+) = 4-methyl-2-oxopentanoate + CO2 + NADH</text>
        <dbReference type="Rhea" id="RHEA:32271"/>
        <dbReference type="ChEBI" id="CHEBI:16526"/>
        <dbReference type="ChEBI" id="CHEBI:17865"/>
        <dbReference type="ChEBI" id="CHEBI:35121"/>
        <dbReference type="ChEBI" id="CHEBI:57540"/>
        <dbReference type="ChEBI" id="CHEBI:57945"/>
        <dbReference type="EC" id="1.1.1.85"/>
    </reaction>
</comment>
<comment type="cofactor">
    <cofactor evidence="1">
        <name>Mg(2+)</name>
        <dbReference type="ChEBI" id="CHEBI:18420"/>
    </cofactor>
    <cofactor evidence="1">
        <name>Mn(2+)</name>
        <dbReference type="ChEBI" id="CHEBI:29035"/>
    </cofactor>
    <text evidence="1">Binds 1 Mg(2+) or Mn(2+) ion per subunit.</text>
</comment>
<comment type="pathway">
    <text evidence="1">Amino-acid biosynthesis; L-leucine biosynthesis; L-leucine from 3-methyl-2-oxobutanoate: step 3/4.</text>
</comment>
<comment type="subunit">
    <text evidence="1">Homodimer.</text>
</comment>
<comment type="subcellular location">
    <subcellularLocation>
        <location evidence="1">Cytoplasm</location>
    </subcellularLocation>
</comment>
<comment type="similarity">
    <text evidence="1">Belongs to the isocitrate and isopropylmalate dehydrogenases family. LeuB type 1 subfamily.</text>
</comment>
<evidence type="ECO:0000255" key="1">
    <source>
        <dbReference type="HAMAP-Rule" id="MF_01033"/>
    </source>
</evidence>
<gene>
    <name evidence="1" type="primary">leuB</name>
    <name type="ordered locus">SAV2058</name>
</gene>
<accession>P65100</accession>
<accession>Q99SJ4</accession>
<organism>
    <name type="scientific">Staphylococcus aureus (strain Mu50 / ATCC 700699)</name>
    <dbReference type="NCBI Taxonomy" id="158878"/>
    <lineage>
        <taxon>Bacteria</taxon>
        <taxon>Bacillati</taxon>
        <taxon>Bacillota</taxon>
        <taxon>Bacilli</taxon>
        <taxon>Bacillales</taxon>
        <taxon>Staphylococcaceae</taxon>
        <taxon>Staphylococcus</taxon>
    </lineage>
</organism>
<dbReference type="EC" id="1.1.1.85" evidence="1"/>
<dbReference type="EMBL" id="BA000017">
    <property type="protein sequence ID" value="BAB58220.1"/>
    <property type="molecule type" value="Genomic_DNA"/>
</dbReference>
<dbReference type="RefSeq" id="WP_000221945.1">
    <property type="nucleotide sequence ID" value="NC_002758.2"/>
</dbReference>
<dbReference type="SMR" id="P65100"/>
<dbReference type="KEGG" id="sav:SAV2058"/>
<dbReference type="HOGENOM" id="CLU_031953_0_3_9"/>
<dbReference type="PhylomeDB" id="P65100"/>
<dbReference type="UniPathway" id="UPA00048">
    <property type="reaction ID" value="UER00072"/>
</dbReference>
<dbReference type="Proteomes" id="UP000002481">
    <property type="component" value="Chromosome"/>
</dbReference>
<dbReference type="GO" id="GO:0005829">
    <property type="term" value="C:cytosol"/>
    <property type="evidence" value="ECO:0007669"/>
    <property type="project" value="TreeGrafter"/>
</dbReference>
<dbReference type="GO" id="GO:0003862">
    <property type="term" value="F:3-isopropylmalate dehydrogenase activity"/>
    <property type="evidence" value="ECO:0007669"/>
    <property type="project" value="UniProtKB-UniRule"/>
</dbReference>
<dbReference type="GO" id="GO:0000287">
    <property type="term" value="F:magnesium ion binding"/>
    <property type="evidence" value="ECO:0007669"/>
    <property type="project" value="InterPro"/>
</dbReference>
<dbReference type="GO" id="GO:0051287">
    <property type="term" value="F:NAD binding"/>
    <property type="evidence" value="ECO:0007669"/>
    <property type="project" value="InterPro"/>
</dbReference>
<dbReference type="GO" id="GO:0009098">
    <property type="term" value="P:L-leucine biosynthetic process"/>
    <property type="evidence" value="ECO:0007669"/>
    <property type="project" value="UniProtKB-UniRule"/>
</dbReference>
<dbReference type="FunFam" id="3.40.718.10:FF:000006">
    <property type="entry name" value="3-isopropylmalate dehydrogenase"/>
    <property type="match status" value="1"/>
</dbReference>
<dbReference type="Gene3D" id="3.40.718.10">
    <property type="entry name" value="Isopropylmalate Dehydrogenase"/>
    <property type="match status" value="1"/>
</dbReference>
<dbReference type="HAMAP" id="MF_01033">
    <property type="entry name" value="LeuB_type1"/>
    <property type="match status" value="1"/>
</dbReference>
<dbReference type="InterPro" id="IPR019818">
    <property type="entry name" value="IsoCit/isopropylmalate_DH_CS"/>
</dbReference>
<dbReference type="InterPro" id="IPR024084">
    <property type="entry name" value="IsoPropMal-DH-like_dom"/>
</dbReference>
<dbReference type="InterPro" id="IPR004429">
    <property type="entry name" value="Isopropylmalate_DH"/>
</dbReference>
<dbReference type="NCBIfam" id="TIGR00169">
    <property type="entry name" value="leuB"/>
    <property type="match status" value="1"/>
</dbReference>
<dbReference type="PANTHER" id="PTHR42979">
    <property type="entry name" value="3-ISOPROPYLMALATE DEHYDROGENASE"/>
    <property type="match status" value="1"/>
</dbReference>
<dbReference type="PANTHER" id="PTHR42979:SF1">
    <property type="entry name" value="3-ISOPROPYLMALATE DEHYDROGENASE"/>
    <property type="match status" value="1"/>
</dbReference>
<dbReference type="Pfam" id="PF00180">
    <property type="entry name" value="Iso_dh"/>
    <property type="match status" value="1"/>
</dbReference>
<dbReference type="SMART" id="SM01329">
    <property type="entry name" value="Iso_dh"/>
    <property type="match status" value="1"/>
</dbReference>
<dbReference type="SUPFAM" id="SSF53659">
    <property type="entry name" value="Isocitrate/Isopropylmalate dehydrogenase-like"/>
    <property type="match status" value="1"/>
</dbReference>
<dbReference type="PROSITE" id="PS00470">
    <property type="entry name" value="IDH_IMDH"/>
    <property type="match status" value="1"/>
</dbReference>
<keyword id="KW-0028">Amino-acid biosynthesis</keyword>
<keyword id="KW-0100">Branched-chain amino acid biosynthesis</keyword>
<keyword id="KW-0963">Cytoplasm</keyword>
<keyword id="KW-0432">Leucine biosynthesis</keyword>
<keyword id="KW-0460">Magnesium</keyword>
<keyword id="KW-0464">Manganese</keyword>
<keyword id="KW-0479">Metal-binding</keyword>
<keyword id="KW-0520">NAD</keyword>
<keyword id="KW-0560">Oxidoreductase</keyword>
<proteinExistence type="inferred from homology"/>
<sequence length="348" mass="38212">MTYNIVALPGDGIGPEILNGSLSLLEIISNKYNFNYQIEHHEFGGASIDTFGEPLTEKTLNACKRADAILLGAIGGPKWTDPNNRPEQGLLKLRKSLNLFANIRPTTVVKGASSLSPLKEERVEGTDLVIVRELTSGIYFGEPRHFNNHEALDSLTYTREEIERIVHVAFKLAASRRGKLTSVDKENVLASSKLWRKVVNEVSQLYPEVTVNHLLVDACSMHLITNPKQFDVIVCENLFGDILSDEASVIPGSLGLSPSASFSNDGPRLYEPIHGSAPDIAGKNVANPFGMILSLAMCLRESLNQPDAADELEQHIYNMIEHGQTTADLGGKLNTTDIFEILSQKLNH</sequence>